<proteinExistence type="evidence at transcript level"/>
<gene>
    <name type="primary">CDK9</name>
</gene>
<dbReference type="EC" id="2.7.11.22"/>
<dbReference type="EC" id="2.7.11.23"/>
<dbReference type="EMBL" id="BT020657">
    <property type="protein sequence ID" value="AAX08674.1"/>
    <property type="molecule type" value="mRNA"/>
</dbReference>
<dbReference type="EMBL" id="BT021882">
    <property type="protein sequence ID" value="AAX46729.1"/>
    <property type="status" value="ALT_FRAME"/>
    <property type="molecule type" value="mRNA"/>
</dbReference>
<dbReference type="EMBL" id="BC118194">
    <property type="protein sequence ID" value="AAI18195.1"/>
    <property type="molecule type" value="mRNA"/>
</dbReference>
<dbReference type="RefSeq" id="NP_001014935.2">
    <property type="nucleotide sequence ID" value="NM_001014935.2"/>
</dbReference>
<dbReference type="SMR" id="Q5EAB2"/>
<dbReference type="FunCoup" id="Q5EAB2">
    <property type="interactions" value="4835"/>
</dbReference>
<dbReference type="STRING" id="9913.ENSBTAP00000006162"/>
<dbReference type="PaxDb" id="9913-ENSBTAP00000006162"/>
<dbReference type="GeneID" id="520580"/>
<dbReference type="KEGG" id="bta:520580"/>
<dbReference type="CTD" id="1025"/>
<dbReference type="VEuPathDB" id="HostDB:ENSBTAG00000004695"/>
<dbReference type="eggNOG" id="KOG0669">
    <property type="taxonomic scope" value="Eukaryota"/>
</dbReference>
<dbReference type="HOGENOM" id="CLU_000288_181_1_1"/>
<dbReference type="InParanoid" id="Q5EAB2"/>
<dbReference type="OMA" id="FPHCDES"/>
<dbReference type="OrthoDB" id="204883at2759"/>
<dbReference type="TreeFam" id="TF101039"/>
<dbReference type="Reactome" id="R-BTA-112382">
    <property type="pathway name" value="Formation of RNA Pol II elongation complex"/>
</dbReference>
<dbReference type="Reactome" id="R-BTA-2173796">
    <property type="pathway name" value="SMAD2/SMAD3:SMAD4 heterotrimer regulates transcription"/>
</dbReference>
<dbReference type="Reactome" id="R-BTA-674695">
    <property type="pathway name" value="RNA Polymerase II Pre-transcription Events"/>
</dbReference>
<dbReference type="Reactome" id="R-BTA-6796648">
    <property type="pathway name" value="TP53 Regulates Transcription of DNA Repair Genes"/>
</dbReference>
<dbReference type="Reactome" id="R-BTA-6807505">
    <property type="pathway name" value="RNA polymerase II transcribes snRNA genes"/>
</dbReference>
<dbReference type="Reactome" id="R-BTA-75955">
    <property type="pathway name" value="RNA Polymerase II Transcription Elongation"/>
</dbReference>
<dbReference type="Reactome" id="R-BTA-9018519">
    <property type="pathway name" value="Estrogen-dependent gene expression"/>
</dbReference>
<dbReference type="Proteomes" id="UP000009136">
    <property type="component" value="Chromosome 11"/>
</dbReference>
<dbReference type="Bgee" id="ENSBTAG00000004695">
    <property type="expression patterns" value="Expressed in neurohypophysis and 104 other cell types or tissues"/>
</dbReference>
<dbReference type="GO" id="GO:0008024">
    <property type="term" value="C:cyclin/CDK positive transcription elongation factor complex"/>
    <property type="evidence" value="ECO:0000250"/>
    <property type="project" value="UniProtKB"/>
</dbReference>
<dbReference type="GO" id="GO:0005737">
    <property type="term" value="C:cytoplasm"/>
    <property type="evidence" value="ECO:0007669"/>
    <property type="project" value="UniProtKB-SubCell"/>
</dbReference>
<dbReference type="GO" id="GO:0005634">
    <property type="term" value="C:nucleus"/>
    <property type="evidence" value="ECO:0000318"/>
    <property type="project" value="GO_Central"/>
</dbReference>
<dbReference type="GO" id="GO:0070691">
    <property type="term" value="C:P-TEFb complex"/>
    <property type="evidence" value="ECO:0000250"/>
    <property type="project" value="UniProtKB"/>
</dbReference>
<dbReference type="GO" id="GO:0016605">
    <property type="term" value="C:PML body"/>
    <property type="evidence" value="ECO:0007669"/>
    <property type="project" value="UniProtKB-SubCell"/>
</dbReference>
<dbReference type="GO" id="GO:0008023">
    <property type="term" value="C:transcription elongation factor complex"/>
    <property type="evidence" value="ECO:0000250"/>
    <property type="project" value="UniProtKB"/>
</dbReference>
<dbReference type="GO" id="GO:0097322">
    <property type="term" value="F:7SK snRNA binding"/>
    <property type="evidence" value="ECO:0000250"/>
    <property type="project" value="UniProtKB"/>
</dbReference>
<dbReference type="GO" id="GO:0005524">
    <property type="term" value="F:ATP binding"/>
    <property type="evidence" value="ECO:0007669"/>
    <property type="project" value="UniProtKB-KW"/>
</dbReference>
<dbReference type="GO" id="GO:0003682">
    <property type="term" value="F:chromatin binding"/>
    <property type="evidence" value="ECO:0000250"/>
    <property type="project" value="UniProtKB"/>
</dbReference>
<dbReference type="GO" id="GO:0004693">
    <property type="term" value="F:cyclin-dependent protein serine/threonine kinase activity"/>
    <property type="evidence" value="ECO:0000318"/>
    <property type="project" value="GO_Central"/>
</dbReference>
<dbReference type="GO" id="GO:0106310">
    <property type="term" value="F:protein serine kinase activity"/>
    <property type="evidence" value="ECO:0007669"/>
    <property type="project" value="RHEA"/>
</dbReference>
<dbReference type="GO" id="GO:0004674">
    <property type="term" value="F:protein serine/threonine kinase activity"/>
    <property type="evidence" value="ECO:0000250"/>
    <property type="project" value="UniProtKB"/>
</dbReference>
<dbReference type="GO" id="GO:0008353">
    <property type="term" value="F:RNA polymerase II CTD heptapeptide repeat kinase activity"/>
    <property type="evidence" value="ECO:0000250"/>
    <property type="project" value="UniProtKB"/>
</dbReference>
<dbReference type="GO" id="GO:0006281">
    <property type="term" value="P:DNA repair"/>
    <property type="evidence" value="ECO:0007669"/>
    <property type="project" value="UniProtKB-KW"/>
</dbReference>
<dbReference type="GO" id="GO:0120187">
    <property type="term" value="P:positive regulation of protein localization to chromatin"/>
    <property type="evidence" value="ECO:0000250"/>
    <property type="project" value="UniProtKB"/>
</dbReference>
<dbReference type="GO" id="GO:0045944">
    <property type="term" value="P:positive regulation of transcription by RNA polymerase II"/>
    <property type="evidence" value="ECO:0000250"/>
    <property type="project" value="UniProtKB"/>
</dbReference>
<dbReference type="GO" id="GO:0032968">
    <property type="term" value="P:positive regulation of transcription elongation by RNA polymerase II"/>
    <property type="evidence" value="ECO:0000250"/>
    <property type="project" value="UniProtKB"/>
</dbReference>
<dbReference type="GO" id="GO:0006366">
    <property type="term" value="P:transcription by RNA polymerase II"/>
    <property type="evidence" value="ECO:0000250"/>
    <property type="project" value="UniProtKB"/>
</dbReference>
<dbReference type="CDD" id="cd07865">
    <property type="entry name" value="STKc_CDK9"/>
    <property type="match status" value="1"/>
</dbReference>
<dbReference type="FunFam" id="1.10.510.10:FF:000203">
    <property type="entry name" value="Cyclin-dependent kinase 9"/>
    <property type="match status" value="1"/>
</dbReference>
<dbReference type="FunFam" id="3.30.200.20:FF:000227">
    <property type="entry name" value="Cyclin-dependent kinase 9"/>
    <property type="match status" value="1"/>
</dbReference>
<dbReference type="Gene3D" id="3.30.200.20">
    <property type="entry name" value="Phosphorylase Kinase, domain 1"/>
    <property type="match status" value="1"/>
</dbReference>
<dbReference type="Gene3D" id="1.10.510.10">
    <property type="entry name" value="Transferase(Phosphotransferase) domain 1"/>
    <property type="match status" value="1"/>
</dbReference>
<dbReference type="InterPro" id="IPR050108">
    <property type="entry name" value="CDK"/>
</dbReference>
<dbReference type="InterPro" id="IPR011009">
    <property type="entry name" value="Kinase-like_dom_sf"/>
</dbReference>
<dbReference type="InterPro" id="IPR000719">
    <property type="entry name" value="Prot_kinase_dom"/>
</dbReference>
<dbReference type="InterPro" id="IPR017441">
    <property type="entry name" value="Protein_kinase_ATP_BS"/>
</dbReference>
<dbReference type="InterPro" id="IPR008271">
    <property type="entry name" value="Ser/Thr_kinase_AS"/>
</dbReference>
<dbReference type="PANTHER" id="PTHR24056">
    <property type="entry name" value="CELL DIVISION PROTEIN KINASE"/>
    <property type="match status" value="1"/>
</dbReference>
<dbReference type="PANTHER" id="PTHR24056:SF233">
    <property type="entry name" value="CYCLIN-DEPENDENT KINASE 9"/>
    <property type="match status" value="1"/>
</dbReference>
<dbReference type="Pfam" id="PF00069">
    <property type="entry name" value="Pkinase"/>
    <property type="match status" value="1"/>
</dbReference>
<dbReference type="SMART" id="SM00220">
    <property type="entry name" value="S_TKc"/>
    <property type="match status" value="1"/>
</dbReference>
<dbReference type="SUPFAM" id="SSF56112">
    <property type="entry name" value="Protein kinase-like (PK-like)"/>
    <property type="match status" value="1"/>
</dbReference>
<dbReference type="PROSITE" id="PS00107">
    <property type="entry name" value="PROTEIN_KINASE_ATP"/>
    <property type="match status" value="1"/>
</dbReference>
<dbReference type="PROSITE" id="PS50011">
    <property type="entry name" value="PROTEIN_KINASE_DOM"/>
    <property type="match status" value="1"/>
</dbReference>
<dbReference type="PROSITE" id="PS00108">
    <property type="entry name" value="PROTEIN_KINASE_ST"/>
    <property type="match status" value="1"/>
</dbReference>
<comment type="function">
    <text evidence="2">Protein kinase involved in the regulation of transcription. Member of the cyclin-dependent kinase pair (CDK9/cyclin-T) complex, also called positive transcription elongation factor b (P-TEFb), which facilitates the transition from abortive to productive elongation by phosphorylating the CTD (C-terminal domain) of the large subunit of RNA polymerase II (RNAP II) POLR2A, SUPT5H and RDBP. This complex is inactive when in the 7SK snRNP complex form. Phosphorylates EP300, MYOD1, RPB1/POLR2A and AR and the negative elongation factors DSIF and NELFE. Regulates cytokine inducible transcription networks by facilitating promoter recognition of target transcription factors (e.g. TNF-inducible RELA/p65 activation and IL-6-inducible STAT3 signaling). Promotes RNA synthesis in genetic programs for cell growth, differentiation and viral pathogenesis. P-TEFb is also involved in cotranscriptional histone modification, mRNA processing and mRNA export. Modulates a complex network of chromatin modifications including histone H2B monoubiquitination (H2Bub1), H3 lysine 4 trimethylation (H3K4me3) and H3K36me3; integrates phosphorylation during transcription with chromatin modifications to control co-transcriptional histone mRNA processing. The CDK9/cyclin-K complex has also a kinase activity towards CTD of RNAP II and can substitute for CDK9/cyclin-T P-TEFb in vitro. Replication stress response protein; the CDK9/cyclin-K complex is required for genome integrity maintenance, by promoting cell cycle recovery from replication arrest and limiting single-stranded DNA amount in response to replication stress, thus reducing the breakdown of stalled replication forks and avoiding DNA damage. In addition, probable function in DNA repair of isoform 2 via interaction with KU70/XRCC6. Promotes cardiac myocyte enlargement. RPB1/POLR2A phosphorylation on 'Ser-2' in CTD activates transcription. AR phosphorylation modulates AR transcription factor promoter selectivity and cell growth. DSIF and NELF phosphorylation promotes transcription by inhibiting their negative effect. The phosphorylation of MYOD1 enhances its transcriptional activity and thus promotes muscle differentiation. Catalyzes phosphorylation of KAT5, promoting KAT5 recruitment to chromatin and histone acetyltransferase activity.</text>
</comment>
<comment type="catalytic activity">
    <reaction evidence="2">
        <text>L-seryl-[protein] + ATP = O-phospho-L-seryl-[protein] + ADP + H(+)</text>
        <dbReference type="Rhea" id="RHEA:17989"/>
        <dbReference type="Rhea" id="RHEA-COMP:9863"/>
        <dbReference type="Rhea" id="RHEA-COMP:11604"/>
        <dbReference type="ChEBI" id="CHEBI:15378"/>
        <dbReference type="ChEBI" id="CHEBI:29999"/>
        <dbReference type="ChEBI" id="CHEBI:30616"/>
        <dbReference type="ChEBI" id="CHEBI:83421"/>
        <dbReference type="ChEBI" id="CHEBI:456216"/>
        <dbReference type="EC" id="2.7.11.22"/>
    </reaction>
    <physiologicalReaction direction="left-to-right" evidence="2">
        <dbReference type="Rhea" id="RHEA:17990"/>
    </physiologicalReaction>
</comment>
<comment type="catalytic activity">
    <reaction evidence="2">
        <text>L-threonyl-[protein] + ATP = O-phospho-L-threonyl-[protein] + ADP + H(+)</text>
        <dbReference type="Rhea" id="RHEA:46608"/>
        <dbReference type="Rhea" id="RHEA-COMP:11060"/>
        <dbReference type="Rhea" id="RHEA-COMP:11605"/>
        <dbReference type="ChEBI" id="CHEBI:15378"/>
        <dbReference type="ChEBI" id="CHEBI:30013"/>
        <dbReference type="ChEBI" id="CHEBI:30616"/>
        <dbReference type="ChEBI" id="CHEBI:61977"/>
        <dbReference type="ChEBI" id="CHEBI:456216"/>
        <dbReference type="EC" id="2.7.11.22"/>
    </reaction>
    <physiologicalReaction direction="left-to-right" evidence="2">
        <dbReference type="Rhea" id="RHEA:46609"/>
    </physiologicalReaction>
</comment>
<comment type="catalytic activity">
    <reaction evidence="2">
        <text>[DNA-directed RNA polymerase] + ATP = phospho-[DNA-directed RNA polymerase] + ADP + H(+)</text>
        <dbReference type="Rhea" id="RHEA:10216"/>
        <dbReference type="Rhea" id="RHEA-COMP:11321"/>
        <dbReference type="Rhea" id="RHEA-COMP:11322"/>
        <dbReference type="ChEBI" id="CHEBI:15378"/>
        <dbReference type="ChEBI" id="CHEBI:30616"/>
        <dbReference type="ChEBI" id="CHEBI:43176"/>
        <dbReference type="ChEBI" id="CHEBI:68546"/>
        <dbReference type="ChEBI" id="CHEBI:456216"/>
        <dbReference type="EC" id="2.7.11.23"/>
    </reaction>
    <physiologicalReaction direction="left-to-right" evidence="2">
        <dbReference type="Rhea" id="RHEA:10217"/>
    </physiologicalReaction>
</comment>
<comment type="activity regulation">
    <text evidence="2">Activation by Thr-186 phosphorylation is calcium Ca(2+) signaling pathway-dependent; actively inactivated by dephosphorylation mediated by PPP1CA, PPM1A and PPM1B. Reversibly repressed by acetylation at Lys-44 and Lys-48 (By similarity).</text>
</comment>
<comment type="subunit">
    <text evidence="2 3">Component of the super elongation complex (SEC), at least composed of EAF1, EAF2, CDK9, MLLT3/AF9, AFF (AFF1 or AFF4), the P-TEFb complex and ELL (ELL, ELL2 or ELL3). Associates with CCNT1/cyclin-T1, CCNT2/cyclin-T2 (isoform A and isoform B) or CCNK/cyclin-K to form active P-TEFb. P-TEFb forms a complex with AFF4/AF5Q31 and is part of the super elongation complex (SEC). Component of a complex which is composed of at least 5 members: HTATSF1/Tat-SF1, P-TEFb complex, RNA pol II, SUPT5H, and NCL/nucleolin. Associates with UBR5 and forms a transcription regulatory complex composed of CDK9, RNAP II, UBR5 and TFIIS/TCEA1 that can stimulate target gene transcription (e.g. gamma fibrinogen/FGG) by recruiting their promoters. Component of the 7SK snRNP inactive complex which is composed of at least 8 members: P-TEFb (composed of CDK9 and CCNT1/cyclin-T1), HEXIM1, HEXIM2, LARP7, BCDIN3, SART3 proteins and 7SK and U6 snRNAs. This inactive 7SK snRNP complex can also interact with NCOR1 and HDAC3, probably to regulate CDK9 acetylation. Release of P-TEFb from P-TEFb/7SK snRNP complex requires both PP2B to transduce calcium Ca(2+) signaling in response to stimuli (e.g. UV or hexamethylene bisacetamide (HMBA)), and PPP1CA to dephosphorylate Thr-186. This released P-TEFb remains inactive in the pre-initiation complex with BRD4 until new Thr-186 phosphorylation occurs after the synthesis of a short RNA. Interacts with BRD4; to target chromatin binding. Interacts with JMJD6. Interacts with activated nuclear STAT3 and RELA/p65. Binds to AR and MYOD1. Forms a complex composed of CDK9, CCNT1/cyclin-T1, EP300 and GATA4 that stimulates hypertrophy in cardiomyocytes (By similarity). The large PER complex involved in the repression of transcriptional termination is composed of at least PER2, CDK9, DDX5, DHX9, NCBP1 and POLR2A (By similarity). Interacts with HSF1 (By similarity). Interacts with TBX21 (By similarity). Interacts with WDR43 (By similarity). Interacts with ZMYND8; the association appears to occur between homodimeric ZMYND8 and the activated form of the P-TEFb complex (By similarity).</text>
</comment>
<comment type="subcellular location">
    <subcellularLocation>
        <location evidence="1">Nucleus</location>
    </subcellularLocation>
    <subcellularLocation>
        <location evidence="1">Cytoplasm</location>
    </subcellularLocation>
    <subcellularLocation>
        <location evidence="1">Nucleus</location>
        <location evidence="1">PML body</location>
    </subcellularLocation>
    <text evidence="1">Accumulates on chromatin in response to replication stress. Complexed with CCNT1 in nuclear speckles, but uncomplexed form in the cytoplasm. The translocation from nucleus to cytoplasm is XPO1/CRM1-dependent. Associates with PML body when acetylated (By similarity).</text>
</comment>
<comment type="PTM">
    <text evidence="2">Autophosphorylation at Thr-186, Ser-347, Thr-350, Ser-353, Thr-354 and Ser-357 triggers kinase activity by promoting cyclin and substrate binding upon conformational changes. Thr-186 phosphorylation requires the calcium Ca(2+) signaling pathway, including CaMK1D and calmodulin. This inhibition is relieved by Thr-29 dephosphorylation. Phosphorylation at Ser-175 inhibits kinase activity. Can be phosphorylated on either Thr-362 or Thr-363 but not on both simultaneously (By similarity).</text>
</comment>
<comment type="PTM">
    <text evidence="2">Dephosphorylation of Thr-186 by PPM1A and PPM1B blocks CDK9 activity and may lead to CDK9 proteasomal degradation. However, PPP1CA-mediated Thr-186 dephosphorylation is required to release P-TEFb from its inactive P-TEFb/7SK snRNP complex. Dephosphorylated at Ser-347 by the PNUTS-PP1 complex during RNA polymerase II transcription pause-release. Dephosphorylation of C-terminus Thr and Ser residues by protein phosphatase-1 (PP1) triggers CDK9 activity.</text>
</comment>
<comment type="PTM">
    <text evidence="2">N6-acetylation of Lys-44 promotes kinase activity, whereas acetylation of both Lys-44 and Lys-48 mediated by PCAF/KAT2B and GCN5/KAT2A reduces kinase activity. The acetylated form associates with PML bodies in the nuclear matrix and with the transcriptionally silent HIV-1 genome; deacetylated upon transcription stimulation. Deacetylated by SIRT7, promoting the kinase activity and subsequent 'Ser-2' phosphorylation of the C-terminal domain (CTD) of RNA polymerase II.</text>
</comment>
<comment type="PTM">
    <text evidence="2">Polyubiquitinated and thus activated by UBR5. This ubiquitination is promoted by TFIIS/TCEA1 and favors 'Ser-2' phosphorylation of RPB1/POLR2A CTD (By similarity).</text>
</comment>
<comment type="similarity">
    <text evidence="7">Belongs to the protein kinase superfamily. CMGC Ser/Thr protein kinase family. CDC2/CDKX subfamily.</text>
</comment>
<comment type="sequence caution" evidence="7">
    <conflict type="frameshift">
        <sequence resource="EMBL-CDS" id="AAX46729"/>
    </conflict>
</comment>
<name>CDK9_BOVIN</name>
<organism>
    <name type="scientific">Bos taurus</name>
    <name type="common">Bovine</name>
    <dbReference type="NCBI Taxonomy" id="9913"/>
    <lineage>
        <taxon>Eukaryota</taxon>
        <taxon>Metazoa</taxon>
        <taxon>Chordata</taxon>
        <taxon>Craniata</taxon>
        <taxon>Vertebrata</taxon>
        <taxon>Euteleostomi</taxon>
        <taxon>Mammalia</taxon>
        <taxon>Eutheria</taxon>
        <taxon>Laurasiatheria</taxon>
        <taxon>Artiodactyla</taxon>
        <taxon>Ruminantia</taxon>
        <taxon>Pecora</taxon>
        <taxon>Bovidae</taxon>
        <taxon>Bovinae</taxon>
        <taxon>Bos</taxon>
    </lineage>
</organism>
<accession>Q5EAB2</accession>
<accession>Q148K6</accession>
<accession>Q58CR5</accession>
<keyword id="KW-0007">Acetylation</keyword>
<keyword id="KW-0067">ATP-binding</keyword>
<keyword id="KW-0963">Cytoplasm</keyword>
<keyword id="KW-0227">DNA damage</keyword>
<keyword id="KW-0234">DNA repair</keyword>
<keyword id="KW-0418">Kinase</keyword>
<keyword id="KW-0547">Nucleotide-binding</keyword>
<keyword id="KW-0539">Nucleus</keyword>
<keyword id="KW-0597">Phosphoprotein</keyword>
<keyword id="KW-1185">Reference proteome</keyword>
<keyword id="KW-0723">Serine/threonine-protein kinase</keyword>
<keyword id="KW-0804">Transcription</keyword>
<keyword id="KW-0805">Transcription regulation</keyword>
<keyword id="KW-0808">Transferase</keyword>
<keyword id="KW-0832">Ubl conjugation</keyword>
<evidence type="ECO:0000250" key="1"/>
<evidence type="ECO:0000250" key="2">
    <source>
        <dbReference type="UniProtKB" id="P50750"/>
    </source>
</evidence>
<evidence type="ECO:0000250" key="3">
    <source>
        <dbReference type="UniProtKB" id="Q99J95"/>
    </source>
</evidence>
<evidence type="ECO:0000255" key="4">
    <source>
        <dbReference type="PROSITE-ProRule" id="PRU00159"/>
    </source>
</evidence>
<evidence type="ECO:0000255" key="5">
    <source>
        <dbReference type="PROSITE-ProRule" id="PRU10027"/>
    </source>
</evidence>
<evidence type="ECO:0000256" key="6">
    <source>
        <dbReference type="SAM" id="MobiDB-lite"/>
    </source>
</evidence>
<evidence type="ECO:0000305" key="7"/>
<reference key="1">
    <citation type="journal article" date="2005" name="BMC Genomics">
        <title>Characterization of 954 bovine full-CDS cDNA sequences.</title>
        <authorList>
            <person name="Harhay G.P."/>
            <person name="Sonstegard T.S."/>
            <person name="Keele J.W."/>
            <person name="Heaton M.P."/>
            <person name="Clawson M.L."/>
            <person name="Snelling W.M."/>
            <person name="Wiedmann R.T."/>
            <person name="Van Tassell C.P."/>
            <person name="Smith T.P.L."/>
        </authorList>
    </citation>
    <scope>NUCLEOTIDE SEQUENCE [LARGE SCALE MRNA]</scope>
</reference>
<reference key="2">
    <citation type="submission" date="2006-06" db="EMBL/GenBank/DDBJ databases">
        <authorList>
            <consortium name="NIH - Mammalian Gene Collection (MGC) project"/>
        </authorList>
    </citation>
    <scope>NUCLEOTIDE SEQUENCE [LARGE SCALE MRNA]</scope>
    <source>
        <strain>Hereford</strain>
        <tissue>Thalamus</tissue>
    </source>
</reference>
<protein>
    <recommendedName>
        <fullName>Cyclin-dependent kinase 9</fullName>
        <ecNumber>2.7.11.22</ecNumber>
        <ecNumber>2.7.11.23</ecNumber>
    </recommendedName>
    <alternativeName>
        <fullName>Cell division protein kinase 9</fullName>
    </alternativeName>
</protein>
<sequence length="372" mass="42748">MAKQYDSVECPFCDEVTKYEKLAKIGQGTFGEVFKAKHRKTGQKVALKKVLMENEKEGFPITALREIKILQLLKHENVVNLIEICRTKASPYNRCKGSIYLVFDFCEHDLAGLLSNVLVKFTLSEIKRVMQMLLNGLYYIHRNKILHRDMKAANVLITRDGVLKLADFGLARAFSLAKNSQPNRYTNRVVTLWYRPPELLLGERDYGPPIDLWGAGCIMAEMWTRSPIMQGNTEQHQLALISQLCGSITPEVWPNVDKYELFEKVELVKGQKRKVKDRLKAYVRDPYALDLIDKLLVLDPAQRIDSDDALNHDFFWSDPMPSDLKGMLSTHLTSMFEYLAPPRRKGSQITQQSTNQSRNPATTNQTEFERVF</sequence>
<feature type="chain" id="PRO_0000085799" description="Cyclin-dependent kinase 9">
    <location>
        <begin position="1"/>
        <end position="372"/>
    </location>
</feature>
<feature type="domain" description="Protein kinase" evidence="4">
    <location>
        <begin position="19"/>
        <end position="315"/>
    </location>
</feature>
<feature type="region of interest" description="T-loop" evidence="1">
    <location>
        <begin position="166"/>
        <end position="191"/>
    </location>
</feature>
<feature type="region of interest" description="Disordered" evidence="6">
    <location>
        <begin position="343"/>
        <end position="372"/>
    </location>
</feature>
<feature type="compositionally biased region" description="Polar residues" evidence="6">
    <location>
        <begin position="347"/>
        <end position="366"/>
    </location>
</feature>
<feature type="active site" description="Proton acceptor" evidence="4 5">
    <location>
        <position position="149"/>
    </location>
</feature>
<feature type="binding site" evidence="4">
    <location>
        <begin position="25"/>
        <end position="33"/>
    </location>
    <ligand>
        <name>ATP</name>
        <dbReference type="ChEBI" id="CHEBI:30616"/>
    </ligand>
</feature>
<feature type="binding site" evidence="4">
    <location>
        <position position="48"/>
    </location>
    <ligand>
        <name>ATP</name>
        <dbReference type="ChEBI" id="CHEBI:30616"/>
    </ligand>
</feature>
<feature type="binding site" evidence="4">
    <location>
        <begin position="104"/>
        <end position="106"/>
    </location>
    <ligand>
        <name>ATP</name>
        <dbReference type="ChEBI" id="CHEBI:30616"/>
    </ligand>
</feature>
<feature type="binding site" evidence="4">
    <location>
        <position position="167"/>
    </location>
    <ligand>
        <name>ATP</name>
        <dbReference type="ChEBI" id="CHEBI:30616"/>
    </ligand>
</feature>
<feature type="modified residue" description="N6-acetyllysine; by EP300/CBP, PCAF/KAT2B and GCN5/KAT2A" evidence="2">
    <location>
        <position position="44"/>
    </location>
</feature>
<feature type="modified residue" description="N6-acetyllysine; by PCAF/KAT2B and GCN5/KAT2A" evidence="2">
    <location>
        <position position="48"/>
    </location>
</feature>
<feature type="modified residue" description="Phosphoserine" evidence="2">
    <location>
        <position position="175"/>
    </location>
</feature>
<feature type="modified residue" description="Phosphothreonine; by CaMK1D" evidence="2">
    <location>
        <position position="186"/>
    </location>
</feature>
<feature type="modified residue" description="Phosphoserine; by CDK9 and PKA" evidence="2">
    <location>
        <position position="347"/>
    </location>
</feature>
<feature type="modified residue" description="Phosphothreonine; by CDK9" evidence="2">
    <location>
        <position position="350"/>
    </location>
</feature>
<feature type="modified residue" description="Phosphoserine; by CDK9" evidence="2">
    <location>
        <position position="353"/>
    </location>
</feature>
<feature type="modified residue" description="Phosphothreonine; by CDK9" evidence="2">
    <location>
        <position position="354"/>
    </location>
</feature>
<feature type="modified residue" description="Phosphoserine; by CDK9" evidence="2">
    <location>
        <position position="357"/>
    </location>
</feature>
<feature type="modified residue" description="Phosphothreonine; by CDK9" evidence="2">
    <location>
        <position position="362"/>
    </location>
</feature>
<feature type="modified residue" description="Phosphothreonine; by CDK9" evidence="2">
    <location>
        <position position="363"/>
    </location>
</feature>